<organism>
    <name type="scientific">Actinobacillus succinogenes (strain ATCC 55618 / DSM 22257 / CCUG 43843 / 130Z)</name>
    <dbReference type="NCBI Taxonomy" id="339671"/>
    <lineage>
        <taxon>Bacteria</taxon>
        <taxon>Pseudomonadati</taxon>
        <taxon>Pseudomonadota</taxon>
        <taxon>Gammaproteobacteria</taxon>
        <taxon>Pasteurellales</taxon>
        <taxon>Pasteurellaceae</taxon>
        <taxon>Actinobacillus</taxon>
    </lineage>
</organism>
<accession>A6VQB0</accession>
<gene>
    <name evidence="1" type="primary">cmoA</name>
    <name type="ordered locus">Asuc_1806</name>
</gene>
<feature type="chain" id="PRO_1000073615" description="Carboxy-S-adenosyl-L-methionine synthase">
    <location>
        <begin position="1"/>
        <end position="241"/>
    </location>
</feature>
<feature type="binding site" evidence="1">
    <location>
        <position position="38"/>
    </location>
    <ligand>
        <name>S-adenosyl-L-methionine</name>
        <dbReference type="ChEBI" id="CHEBI:59789"/>
    </ligand>
</feature>
<feature type="binding site" evidence="1">
    <location>
        <begin position="63"/>
        <end position="65"/>
    </location>
    <ligand>
        <name>S-adenosyl-L-methionine</name>
        <dbReference type="ChEBI" id="CHEBI:59789"/>
    </ligand>
</feature>
<feature type="binding site" evidence="1">
    <location>
        <begin position="88"/>
        <end position="89"/>
    </location>
    <ligand>
        <name>S-adenosyl-L-methionine</name>
        <dbReference type="ChEBI" id="CHEBI:59789"/>
    </ligand>
</feature>
<feature type="binding site" evidence="1">
    <location>
        <begin position="116"/>
        <end position="117"/>
    </location>
    <ligand>
        <name>S-adenosyl-L-methionine</name>
        <dbReference type="ChEBI" id="CHEBI:59789"/>
    </ligand>
</feature>
<feature type="binding site" evidence="1">
    <location>
        <position position="131"/>
    </location>
    <ligand>
        <name>S-adenosyl-L-methionine</name>
        <dbReference type="ChEBI" id="CHEBI:59789"/>
    </ligand>
</feature>
<feature type="binding site" evidence="1">
    <location>
        <position position="198"/>
    </location>
    <ligand>
        <name>S-adenosyl-L-methionine</name>
        <dbReference type="ChEBI" id="CHEBI:59789"/>
    </ligand>
</feature>
<dbReference type="EC" id="2.1.3.-" evidence="1"/>
<dbReference type="EMBL" id="CP000746">
    <property type="protein sequence ID" value="ABR75157.1"/>
    <property type="molecule type" value="Genomic_DNA"/>
</dbReference>
<dbReference type="RefSeq" id="WP_012073534.1">
    <property type="nucleotide sequence ID" value="NC_009655.1"/>
</dbReference>
<dbReference type="SMR" id="A6VQB0"/>
<dbReference type="STRING" id="339671.Asuc_1806"/>
<dbReference type="KEGG" id="asu:Asuc_1806"/>
<dbReference type="eggNOG" id="COG4106">
    <property type="taxonomic scope" value="Bacteria"/>
</dbReference>
<dbReference type="HOGENOM" id="CLU_078475_0_0_6"/>
<dbReference type="OrthoDB" id="9779941at2"/>
<dbReference type="Proteomes" id="UP000001114">
    <property type="component" value="Chromosome"/>
</dbReference>
<dbReference type="GO" id="GO:0016743">
    <property type="term" value="F:carboxyl- or carbamoyltransferase activity"/>
    <property type="evidence" value="ECO:0007669"/>
    <property type="project" value="UniProtKB-UniRule"/>
</dbReference>
<dbReference type="GO" id="GO:1904047">
    <property type="term" value="F:S-adenosyl-L-methionine binding"/>
    <property type="evidence" value="ECO:0007669"/>
    <property type="project" value="UniProtKB-UniRule"/>
</dbReference>
<dbReference type="GO" id="GO:0002098">
    <property type="term" value="P:tRNA wobble uridine modification"/>
    <property type="evidence" value="ECO:0007669"/>
    <property type="project" value="InterPro"/>
</dbReference>
<dbReference type="CDD" id="cd02440">
    <property type="entry name" value="AdoMet_MTases"/>
    <property type="match status" value="1"/>
</dbReference>
<dbReference type="Gene3D" id="3.40.50.150">
    <property type="entry name" value="Vaccinia Virus protein VP39"/>
    <property type="match status" value="1"/>
</dbReference>
<dbReference type="HAMAP" id="MF_01589">
    <property type="entry name" value="Cx_SAM_synthase"/>
    <property type="match status" value="1"/>
</dbReference>
<dbReference type="InterPro" id="IPR005271">
    <property type="entry name" value="CmoA"/>
</dbReference>
<dbReference type="InterPro" id="IPR041698">
    <property type="entry name" value="Methyltransf_25"/>
</dbReference>
<dbReference type="InterPro" id="IPR029063">
    <property type="entry name" value="SAM-dependent_MTases_sf"/>
</dbReference>
<dbReference type="NCBIfam" id="TIGR00740">
    <property type="entry name" value="carboxy-S-adenosyl-L-methionine synthase CmoA"/>
    <property type="match status" value="1"/>
</dbReference>
<dbReference type="NCBIfam" id="NF011995">
    <property type="entry name" value="PRK15451.1"/>
    <property type="match status" value="1"/>
</dbReference>
<dbReference type="PANTHER" id="PTHR43861:SF2">
    <property type="entry name" value="CARBOXY-S-ADENOSYL-L-METHIONINE SYNTHASE"/>
    <property type="match status" value="1"/>
</dbReference>
<dbReference type="PANTHER" id="PTHR43861">
    <property type="entry name" value="TRANS-ACONITATE 2-METHYLTRANSFERASE-RELATED"/>
    <property type="match status" value="1"/>
</dbReference>
<dbReference type="Pfam" id="PF13649">
    <property type="entry name" value="Methyltransf_25"/>
    <property type="match status" value="1"/>
</dbReference>
<dbReference type="PIRSF" id="PIRSF006325">
    <property type="entry name" value="MeTrfase_bac"/>
    <property type="match status" value="1"/>
</dbReference>
<dbReference type="SUPFAM" id="SSF53335">
    <property type="entry name" value="S-adenosyl-L-methionine-dependent methyltransferases"/>
    <property type="match status" value="1"/>
</dbReference>
<reference key="1">
    <citation type="journal article" date="2010" name="BMC Genomics">
        <title>A genomic perspective on the potential of Actinobacillus succinogenes for industrial succinate production.</title>
        <authorList>
            <person name="McKinlay J.B."/>
            <person name="Laivenieks M."/>
            <person name="Schindler B.D."/>
            <person name="McKinlay A.A."/>
            <person name="Siddaramappa S."/>
            <person name="Challacombe J.F."/>
            <person name="Lowry S.R."/>
            <person name="Clum A."/>
            <person name="Lapidus A.L."/>
            <person name="Burkhart K.B."/>
            <person name="Harkins V."/>
            <person name="Vieille C."/>
        </authorList>
    </citation>
    <scope>NUCLEOTIDE SEQUENCE [LARGE SCALE GENOMIC DNA]</scope>
    <source>
        <strain>ATCC 55618 / DSM 22257 / CCUG 43843 / 130Z</strain>
    </source>
</reference>
<name>CMOA_ACTSZ</name>
<sequence>MSKDTIFSAPIEKLGDFTFDENVAEVFPDMIQRSVPGYSNIITAIGMLAERFVTPDSQVYDLGCSRGAATLSARRNIRQPNVTIIGVDNSQPMVERARQHLNAYHSDIPVEILCDDIRNISIENASMVILNFTLQFLPPEDRQSLLEKIYRGLNPGGLLVLSEKFRFKDDTTNNLLIELHHAFKRANGYSELEVSQKRAALENVMRIDSSNTHKVRLKNVGFSHVELWFQCFNFGSVIAIK</sequence>
<protein>
    <recommendedName>
        <fullName evidence="1">Carboxy-S-adenosyl-L-methionine synthase</fullName>
        <shortName evidence="1">Cx-SAM synthase</shortName>
        <ecNumber evidence="1">2.1.3.-</ecNumber>
    </recommendedName>
</protein>
<keyword id="KW-1185">Reference proteome</keyword>
<keyword id="KW-0949">S-adenosyl-L-methionine</keyword>
<keyword id="KW-0808">Transferase</keyword>
<comment type="function">
    <text evidence="1">Catalyzes the conversion of S-adenosyl-L-methionine (SAM) to carboxy-S-adenosyl-L-methionine (Cx-SAM).</text>
</comment>
<comment type="catalytic activity">
    <reaction evidence="1">
        <text>prephenate + S-adenosyl-L-methionine = carboxy-S-adenosyl-L-methionine + 3-phenylpyruvate + H2O</text>
        <dbReference type="Rhea" id="RHEA:51692"/>
        <dbReference type="ChEBI" id="CHEBI:15377"/>
        <dbReference type="ChEBI" id="CHEBI:18005"/>
        <dbReference type="ChEBI" id="CHEBI:29934"/>
        <dbReference type="ChEBI" id="CHEBI:59789"/>
        <dbReference type="ChEBI" id="CHEBI:134278"/>
    </reaction>
</comment>
<comment type="subunit">
    <text evidence="1">Homodimer.</text>
</comment>
<comment type="similarity">
    <text evidence="1">Belongs to the class I-like SAM-binding methyltransferase superfamily. Cx-SAM synthase family.</text>
</comment>
<evidence type="ECO:0000255" key="1">
    <source>
        <dbReference type="HAMAP-Rule" id="MF_01589"/>
    </source>
</evidence>
<proteinExistence type="inferred from homology"/>